<comment type="function">
    <text evidence="1">Plays an important role in maintaining outer membrane integrity.</text>
</comment>
<comment type="subcellular location">
    <subcellularLocation>
        <location evidence="1">Cell outer membrane</location>
        <topology evidence="1">Lipid-anchor</topology>
        <orientation evidence="1">Periplasmic side</orientation>
    </subcellularLocation>
</comment>
<comment type="similarity">
    <text evidence="4">Belongs to the lipoprotein DolP family.</text>
</comment>
<name>DOLP_ECO57</name>
<sequence>MKALSPIAVLISALLLQGCVAAAVVGTAAVGTKAATDPRSVGTQVDDGTLEVRVNSALSKDEQIKKEARINVTAYQGKVLLVGQSPNAELSARAKQIAMGVDGANEVYNEIRQGQPIGLGEASNDTWITTKVRSQLLTSDLVKSSNVKVTTENGEVFLMGLVTEREAKAAADIASRVSGVKRVTTAFTFIK</sequence>
<keyword id="KW-0998">Cell outer membrane</keyword>
<keyword id="KW-0449">Lipoprotein</keyword>
<keyword id="KW-0472">Membrane</keyword>
<keyword id="KW-0564">Palmitate</keyword>
<keyword id="KW-1185">Reference proteome</keyword>
<keyword id="KW-0677">Repeat</keyword>
<keyword id="KW-0732">Signal</keyword>
<feature type="signal peptide" evidence="3">
    <location>
        <begin position="1"/>
        <end position="18"/>
    </location>
</feature>
<feature type="chain" id="PRO_0000013911" description="Outer membrane lipoprotein DolP">
    <location>
        <begin position="19"/>
        <end position="191"/>
    </location>
</feature>
<feature type="domain" description="BON 1" evidence="2">
    <location>
        <begin position="46"/>
        <end position="115"/>
    </location>
</feature>
<feature type="domain" description="BON 2" evidence="2">
    <location>
        <begin position="124"/>
        <end position="191"/>
    </location>
</feature>
<feature type="lipid moiety-binding region" description="N-palmitoyl cysteine" evidence="3">
    <location>
        <position position="19"/>
    </location>
</feature>
<feature type="lipid moiety-binding region" description="S-diacylglycerol cysteine" evidence="3">
    <location>
        <position position="19"/>
    </location>
</feature>
<reference key="1">
    <citation type="journal article" date="2001" name="Nature">
        <title>Genome sequence of enterohaemorrhagic Escherichia coli O157:H7.</title>
        <authorList>
            <person name="Perna N.T."/>
            <person name="Plunkett G. III"/>
            <person name="Burland V."/>
            <person name="Mau B."/>
            <person name="Glasner J.D."/>
            <person name="Rose D.J."/>
            <person name="Mayhew G.F."/>
            <person name="Evans P.S."/>
            <person name="Gregor J."/>
            <person name="Kirkpatrick H.A."/>
            <person name="Posfai G."/>
            <person name="Hackett J."/>
            <person name="Klink S."/>
            <person name="Boutin A."/>
            <person name="Shao Y."/>
            <person name="Miller L."/>
            <person name="Grotbeck E.J."/>
            <person name="Davis N.W."/>
            <person name="Lim A."/>
            <person name="Dimalanta E.T."/>
            <person name="Potamousis K."/>
            <person name="Apodaca J."/>
            <person name="Anantharaman T.S."/>
            <person name="Lin J."/>
            <person name="Yen G."/>
            <person name="Schwartz D.C."/>
            <person name="Welch R.A."/>
            <person name="Blattner F.R."/>
        </authorList>
    </citation>
    <scope>NUCLEOTIDE SEQUENCE [LARGE SCALE GENOMIC DNA]</scope>
    <source>
        <strain>O157:H7 / EDL933 / ATCC 700927 / EHEC</strain>
    </source>
</reference>
<reference key="2">
    <citation type="journal article" date="2001" name="DNA Res.">
        <title>Complete genome sequence of enterohemorrhagic Escherichia coli O157:H7 and genomic comparison with a laboratory strain K-12.</title>
        <authorList>
            <person name="Hayashi T."/>
            <person name="Makino K."/>
            <person name="Ohnishi M."/>
            <person name="Kurokawa K."/>
            <person name="Ishii K."/>
            <person name="Yokoyama K."/>
            <person name="Han C.-G."/>
            <person name="Ohtsubo E."/>
            <person name="Nakayama K."/>
            <person name="Murata T."/>
            <person name="Tanaka M."/>
            <person name="Tobe T."/>
            <person name="Iida T."/>
            <person name="Takami H."/>
            <person name="Honda T."/>
            <person name="Sasakawa C."/>
            <person name="Ogasawara N."/>
            <person name="Yasunaga T."/>
            <person name="Kuhara S."/>
            <person name="Shiba T."/>
            <person name="Hattori M."/>
            <person name="Shinagawa H."/>
        </authorList>
    </citation>
    <scope>NUCLEOTIDE SEQUENCE [LARGE SCALE GENOMIC DNA]</scope>
    <source>
        <strain>O157:H7 / Sakai / RIMD 0509952 / EHEC</strain>
    </source>
</reference>
<dbReference type="EMBL" id="AE005174">
    <property type="protein sequence ID" value="AAG58286.1"/>
    <property type="molecule type" value="Genomic_DNA"/>
</dbReference>
<dbReference type="EMBL" id="BA000007">
    <property type="protein sequence ID" value="BAB37454.1"/>
    <property type="molecule type" value="Genomic_DNA"/>
</dbReference>
<dbReference type="PIR" id="B85978">
    <property type="entry name" value="B85978"/>
</dbReference>
<dbReference type="PIR" id="G91132">
    <property type="entry name" value="G91132"/>
</dbReference>
<dbReference type="RefSeq" id="NP_312058.1">
    <property type="nucleotide sequence ID" value="NC_002695.1"/>
</dbReference>
<dbReference type="RefSeq" id="WP_000646033.1">
    <property type="nucleotide sequence ID" value="NZ_VOAI01000014.1"/>
</dbReference>
<dbReference type="SMR" id="P64598"/>
<dbReference type="STRING" id="155864.Z4509"/>
<dbReference type="GeneID" id="86861296"/>
<dbReference type="GeneID" id="916131"/>
<dbReference type="KEGG" id="ece:Z4509"/>
<dbReference type="KEGG" id="ecs:ECs_4031"/>
<dbReference type="PATRIC" id="fig|386585.9.peg.4210"/>
<dbReference type="eggNOG" id="COG2823">
    <property type="taxonomic scope" value="Bacteria"/>
</dbReference>
<dbReference type="HOGENOM" id="CLU_083606_3_0_6"/>
<dbReference type="OMA" id="TSYNRQV"/>
<dbReference type="Proteomes" id="UP000000558">
    <property type="component" value="Chromosome"/>
</dbReference>
<dbReference type="Proteomes" id="UP000002519">
    <property type="component" value="Chromosome"/>
</dbReference>
<dbReference type="GO" id="GO:0009279">
    <property type="term" value="C:cell outer membrane"/>
    <property type="evidence" value="ECO:0007669"/>
    <property type="project" value="UniProtKB-SubCell"/>
</dbReference>
<dbReference type="Gene3D" id="3.30.1340.30">
    <property type="match status" value="1"/>
</dbReference>
<dbReference type="InterPro" id="IPR007055">
    <property type="entry name" value="BON_dom"/>
</dbReference>
<dbReference type="InterPro" id="IPR051686">
    <property type="entry name" value="Lipoprotein_DolP"/>
</dbReference>
<dbReference type="InterPro" id="IPR014004">
    <property type="entry name" value="Transpt-assoc_nodulatn_dom_bac"/>
</dbReference>
<dbReference type="NCBIfam" id="NF008247">
    <property type="entry name" value="PRK11023.1"/>
    <property type="match status" value="1"/>
</dbReference>
<dbReference type="PANTHER" id="PTHR34606">
    <property type="entry name" value="BON DOMAIN-CONTAINING PROTEIN"/>
    <property type="match status" value="1"/>
</dbReference>
<dbReference type="PANTHER" id="PTHR34606:SF4">
    <property type="entry name" value="OUTER MEMBRANE LIPOPROTEIN DOLP"/>
    <property type="match status" value="1"/>
</dbReference>
<dbReference type="Pfam" id="PF04972">
    <property type="entry name" value="BON"/>
    <property type="match status" value="2"/>
</dbReference>
<dbReference type="SMART" id="SM00749">
    <property type="entry name" value="BON"/>
    <property type="match status" value="2"/>
</dbReference>
<dbReference type="PROSITE" id="PS50914">
    <property type="entry name" value="BON"/>
    <property type="match status" value="2"/>
</dbReference>
<dbReference type="PROSITE" id="PS51257">
    <property type="entry name" value="PROKAR_LIPOPROTEIN"/>
    <property type="match status" value="1"/>
</dbReference>
<evidence type="ECO:0000250" key="1">
    <source>
        <dbReference type="UniProtKB" id="P64596"/>
    </source>
</evidence>
<evidence type="ECO:0000255" key="2">
    <source>
        <dbReference type="PROSITE-ProRule" id="PRU00229"/>
    </source>
</evidence>
<evidence type="ECO:0000255" key="3">
    <source>
        <dbReference type="PROSITE-ProRule" id="PRU00303"/>
    </source>
</evidence>
<evidence type="ECO:0000305" key="4"/>
<proteinExistence type="inferred from homology"/>
<gene>
    <name evidence="1" type="primary">dolP</name>
    <name type="synonym">yraP</name>
    <name type="ordered locus">Z4509</name>
    <name type="ordered locus">ECs4031</name>
</gene>
<organism>
    <name type="scientific">Escherichia coli O157:H7</name>
    <dbReference type="NCBI Taxonomy" id="83334"/>
    <lineage>
        <taxon>Bacteria</taxon>
        <taxon>Pseudomonadati</taxon>
        <taxon>Pseudomonadota</taxon>
        <taxon>Gammaproteobacteria</taxon>
        <taxon>Enterobacterales</taxon>
        <taxon>Enterobacteriaceae</taxon>
        <taxon>Escherichia</taxon>
    </lineage>
</organism>
<protein>
    <recommendedName>
        <fullName evidence="1">Outer membrane lipoprotein DolP</fullName>
    </recommendedName>
</protein>
<accession>P64598</accession>
<accession>P45467</accession>